<reference key="1">
    <citation type="journal article" date="1992" name="Biochem. J.">
        <title>Developmental regulation and neuronal expression of the mRNA of rat n-chimaerin, a p21rac GAP:cDNA sequence.</title>
        <authorList>
            <person name="Lim H.H."/>
            <person name="Michael G.J."/>
            <person name="Smith P."/>
            <person name="Lim L."/>
            <person name="Hall C."/>
        </authorList>
    </citation>
    <scope>NUCLEOTIDE SEQUENCE [MRNA]</scope>
    <source>
        <strain>Wistar</strain>
        <tissue>Brain</tissue>
    </source>
</reference>
<reference key="2">
    <citation type="journal article" date="2004" name="Genome Res.">
        <title>The status, quality, and expansion of the NIH full-length cDNA project: the Mammalian Gene Collection (MGC).</title>
        <authorList>
            <consortium name="The MGC Project Team"/>
        </authorList>
    </citation>
    <scope>NUCLEOTIDE SEQUENCE [LARGE SCALE MRNA]</scope>
    <source>
        <tissue>Brain</tissue>
    </source>
</reference>
<reference key="3">
    <citation type="journal article" date="2006" name="Proc. Natl. Acad. Sci. U.S.A.">
        <title>Quantitative phosphoproteomics of vasopressin-sensitive renal cells: regulation of aquaporin-2 phosphorylation at two sites.</title>
        <authorList>
            <person name="Hoffert J.D."/>
            <person name="Pisitkun T."/>
            <person name="Wang G."/>
            <person name="Shen R.-F."/>
            <person name="Knepper M.A."/>
        </authorList>
    </citation>
    <scope>PHOSPHORYLATION [LARGE SCALE ANALYSIS] AT THR-215</scope>
    <scope>IDENTIFICATION BY MASS SPECTROMETRY [LARGE SCALE ANALYSIS]</scope>
</reference>
<comment type="function">
    <text>GTPase-activating protein for p21-rac and a phorbol ester receptor. Involved in the assembly of neuronal locomotor circuits as a direct effector of EPHA4 in axon guidance.</text>
</comment>
<comment type="subunit">
    <text evidence="1">Interacts with EPHA4; effector of EPHA4 in axon guidance linking EPHA4 activation to RAC1 regulation.</text>
</comment>
<comment type="tissue specificity">
    <text>In neurons in brain regions that are involved in learning and memory processes.</text>
</comment>
<comment type="developmental stage">
    <text>Increases in amount during brain development coincident with synaptogenesis.</text>
</comment>
<comment type="PTM">
    <text evidence="1">Phosphorylated. Phosphorylation is EPHA4 kinase activity-dependent (By similarity).</text>
</comment>
<gene>
    <name type="primary">Chn1</name>
    <name type="synonym">Arhgap2</name>
    <name type="synonym">Chn</name>
</gene>
<organism>
    <name type="scientific">Rattus norvegicus</name>
    <name type="common">Rat</name>
    <dbReference type="NCBI Taxonomy" id="10116"/>
    <lineage>
        <taxon>Eukaryota</taxon>
        <taxon>Metazoa</taxon>
        <taxon>Chordata</taxon>
        <taxon>Craniata</taxon>
        <taxon>Vertebrata</taxon>
        <taxon>Euteleostomi</taxon>
        <taxon>Mammalia</taxon>
        <taxon>Eutheria</taxon>
        <taxon>Euarchontoglires</taxon>
        <taxon>Glires</taxon>
        <taxon>Rodentia</taxon>
        <taxon>Myomorpha</taxon>
        <taxon>Muroidea</taxon>
        <taxon>Muridae</taxon>
        <taxon>Murinae</taxon>
        <taxon>Rattus</taxon>
    </lineage>
</organism>
<name>CHIN_RAT</name>
<accession>P30337</accession>
<accession>Q505J4</accession>
<proteinExistence type="evidence at protein level"/>
<evidence type="ECO:0000250" key="1"/>
<evidence type="ECO:0000250" key="2">
    <source>
        <dbReference type="UniProtKB" id="P15882"/>
    </source>
</evidence>
<evidence type="ECO:0000255" key="3">
    <source>
        <dbReference type="PROSITE-ProRule" id="PRU00172"/>
    </source>
</evidence>
<evidence type="ECO:0000255" key="4">
    <source>
        <dbReference type="PROSITE-ProRule" id="PRU00226"/>
    </source>
</evidence>
<evidence type="ECO:0000256" key="5">
    <source>
        <dbReference type="SAM" id="MobiDB-lite"/>
    </source>
</evidence>
<evidence type="ECO:0000305" key="6"/>
<evidence type="ECO:0007744" key="7">
    <source>
    </source>
</evidence>
<keyword id="KW-0343">GTPase activation</keyword>
<keyword id="KW-0479">Metal-binding</keyword>
<keyword id="KW-0524">Neurogenesis</keyword>
<keyword id="KW-0597">Phosphoprotein</keyword>
<keyword id="KW-1185">Reference proteome</keyword>
<keyword id="KW-0862">Zinc</keyword>
<keyword id="KW-0863">Zinc-finger</keyword>
<protein>
    <recommendedName>
        <fullName>N-chimaerin</fullName>
    </recommendedName>
    <alternativeName>
        <fullName>A-chimaerin</fullName>
    </alternativeName>
    <alternativeName>
        <fullName>Alpha-chimerin</fullName>
    </alternativeName>
    <alternativeName>
        <fullName>N-chimerin</fullName>
        <shortName>NC</shortName>
    </alternativeName>
    <alternativeName>
        <fullName>Rho GTPase-activating protein 2</fullName>
    </alternativeName>
</protein>
<sequence>MPSKESWSGRKTNRATVHKSKQEGRQQDLLIAALGMKLGSQKSSVTIWQPLKLFAYSQLTSLVRRATLKENEQIPKYEKVHNFKVHTFRGPHWCEYCANFMWGLIAQGVKCADCGLNVHKQCSKMVPNDCKPDLKHVKKVYSCDLTTLVKAHITKRPMVVDMCIREIESRGLNSEGLYRVSGFSDLIEDVKMAFDRDGEKADISVNMYEDINIITGALKLYFRDLPIPLITYDAYPKFIESAKIVDPDEQLETLHEALRSLPPAHCETLRYLMAHLKRVTLHEKENLMSAENLGIVFGPTLMRSPELDPMAALNDIRYQRLVVELLIKNEDILF</sequence>
<feature type="chain" id="PRO_0000056696" description="N-chimaerin">
    <location>
        <begin position="1"/>
        <end position="334"/>
    </location>
</feature>
<feature type="domain" description="Rho-GAP" evidence="3">
    <location>
        <begin position="143"/>
        <end position="334"/>
    </location>
</feature>
<feature type="zinc finger region" description="Phorbol-ester/DAG-type" evidence="4">
    <location>
        <begin position="80"/>
        <end position="130"/>
    </location>
</feature>
<feature type="region of interest" description="Disordered" evidence="5">
    <location>
        <begin position="1"/>
        <end position="22"/>
    </location>
</feature>
<feature type="compositionally biased region" description="Polar residues" evidence="5">
    <location>
        <begin position="1"/>
        <end position="10"/>
    </location>
</feature>
<feature type="site" description="Arginine finger; crucial for GTP hydrolysis by stabilizing the transition state" evidence="3">
    <location>
        <position position="179"/>
    </location>
</feature>
<feature type="modified residue" description="Phosphothreonine" evidence="2">
    <location>
        <position position="67"/>
    </location>
</feature>
<feature type="modified residue" description="Phosphothreonine" evidence="7">
    <location>
        <position position="215"/>
    </location>
</feature>
<feature type="sequence conflict" description="In Ref. 1; CAA47672." evidence="6" ref="1">
    <original>K</original>
    <variation>N</variation>
    <location>
        <position position="21"/>
    </location>
</feature>
<dbReference type="EMBL" id="X67250">
    <property type="protein sequence ID" value="CAA47672.1"/>
    <property type="molecule type" value="mRNA"/>
</dbReference>
<dbReference type="EMBL" id="BC094519">
    <property type="protein sequence ID" value="AAH94519.1"/>
    <property type="molecule type" value="mRNA"/>
</dbReference>
<dbReference type="PIR" id="S29128">
    <property type="entry name" value="S29128"/>
</dbReference>
<dbReference type="RefSeq" id="NP_114472.2">
    <property type="nucleotide sequence ID" value="NM_032083.2"/>
</dbReference>
<dbReference type="SMR" id="P30337"/>
<dbReference type="DIP" id="DIP-39378N"/>
<dbReference type="FunCoup" id="P30337">
    <property type="interactions" value="1397"/>
</dbReference>
<dbReference type="IntAct" id="P30337">
    <property type="interactions" value="2"/>
</dbReference>
<dbReference type="STRING" id="10116.ENSRNOP00000060544"/>
<dbReference type="iPTMnet" id="P30337"/>
<dbReference type="PhosphoSitePlus" id="P30337"/>
<dbReference type="PaxDb" id="10116-ENSRNOP00000060544"/>
<dbReference type="GeneID" id="84030"/>
<dbReference type="KEGG" id="rno:84030"/>
<dbReference type="UCSC" id="RGD:620139">
    <property type="organism name" value="rat"/>
</dbReference>
<dbReference type="AGR" id="RGD:620139"/>
<dbReference type="CTD" id="1123"/>
<dbReference type="RGD" id="620139">
    <property type="gene designation" value="Chn1"/>
</dbReference>
<dbReference type="eggNOG" id="KOG1453">
    <property type="taxonomic scope" value="Eukaryota"/>
</dbReference>
<dbReference type="HOGENOM" id="CLU_015883_0_0_1"/>
<dbReference type="InParanoid" id="P30337"/>
<dbReference type="PhylomeDB" id="P30337"/>
<dbReference type="PRO" id="PR:P30337"/>
<dbReference type="Proteomes" id="UP000002494">
    <property type="component" value="Unplaced"/>
</dbReference>
<dbReference type="GO" id="GO:0046875">
    <property type="term" value="F:ephrin receptor binding"/>
    <property type="evidence" value="ECO:0000266"/>
    <property type="project" value="RGD"/>
</dbReference>
<dbReference type="GO" id="GO:0005096">
    <property type="term" value="F:GTPase activator activity"/>
    <property type="evidence" value="ECO:0000318"/>
    <property type="project" value="GO_Central"/>
</dbReference>
<dbReference type="GO" id="GO:0001565">
    <property type="term" value="F:phorbol ester receptor activity"/>
    <property type="evidence" value="ECO:0000304"/>
    <property type="project" value="RGD"/>
</dbReference>
<dbReference type="GO" id="GO:0008270">
    <property type="term" value="F:zinc ion binding"/>
    <property type="evidence" value="ECO:0007669"/>
    <property type="project" value="UniProtKB-KW"/>
</dbReference>
<dbReference type="GO" id="GO:0048013">
    <property type="term" value="P:ephrin receptor signaling pathway"/>
    <property type="evidence" value="ECO:0000250"/>
    <property type="project" value="UniProtKB"/>
</dbReference>
<dbReference type="GO" id="GO:0008045">
    <property type="term" value="P:motor neuron axon guidance"/>
    <property type="evidence" value="ECO:0000250"/>
    <property type="project" value="UniProtKB"/>
</dbReference>
<dbReference type="GO" id="GO:0050770">
    <property type="term" value="P:regulation of axonogenesis"/>
    <property type="evidence" value="ECO:0000250"/>
    <property type="project" value="UniProtKB"/>
</dbReference>
<dbReference type="CDD" id="cd04372">
    <property type="entry name" value="RhoGAP_chimaerin"/>
    <property type="match status" value="1"/>
</dbReference>
<dbReference type="FunFam" id="1.10.555.10:FF:000005">
    <property type="entry name" value="Chimaerin"/>
    <property type="match status" value="1"/>
</dbReference>
<dbReference type="FunFam" id="3.30.60.20:FF:000030">
    <property type="entry name" value="Chimaerin"/>
    <property type="match status" value="1"/>
</dbReference>
<dbReference type="Gene3D" id="3.30.60.20">
    <property type="match status" value="1"/>
</dbReference>
<dbReference type="Gene3D" id="1.10.555.10">
    <property type="entry name" value="Rho GTPase activation protein"/>
    <property type="match status" value="1"/>
</dbReference>
<dbReference type="InterPro" id="IPR046349">
    <property type="entry name" value="C1-like_sf"/>
</dbReference>
<dbReference type="InterPro" id="IPR020454">
    <property type="entry name" value="DAG/PE-bd"/>
</dbReference>
<dbReference type="InterPro" id="IPR002219">
    <property type="entry name" value="PE/DAG-bd"/>
</dbReference>
<dbReference type="InterPro" id="IPR051854">
    <property type="entry name" value="Rho-type_GAP"/>
</dbReference>
<dbReference type="InterPro" id="IPR008936">
    <property type="entry name" value="Rho_GTPase_activation_prot"/>
</dbReference>
<dbReference type="InterPro" id="IPR037860">
    <property type="entry name" value="RhoGAP_chimaerin"/>
</dbReference>
<dbReference type="InterPro" id="IPR000198">
    <property type="entry name" value="RhoGAP_dom"/>
</dbReference>
<dbReference type="PANTHER" id="PTHR46075">
    <property type="entry name" value="CHIMERIN FAMILY MEMBER"/>
    <property type="match status" value="1"/>
</dbReference>
<dbReference type="PANTHER" id="PTHR46075:SF6">
    <property type="entry name" value="N-CHIMAERIN"/>
    <property type="match status" value="1"/>
</dbReference>
<dbReference type="Pfam" id="PF00130">
    <property type="entry name" value="C1_1"/>
    <property type="match status" value="1"/>
</dbReference>
<dbReference type="Pfam" id="PF00620">
    <property type="entry name" value="RhoGAP"/>
    <property type="match status" value="1"/>
</dbReference>
<dbReference type="PRINTS" id="PR00008">
    <property type="entry name" value="DAGPEDOMAIN"/>
</dbReference>
<dbReference type="SMART" id="SM00109">
    <property type="entry name" value="C1"/>
    <property type="match status" value="1"/>
</dbReference>
<dbReference type="SMART" id="SM00324">
    <property type="entry name" value="RhoGAP"/>
    <property type="match status" value="1"/>
</dbReference>
<dbReference type="SUPFAM" id="SSF57889">
    <property type="entry name" value="Cysteine-rich domain"/>
    <property type="match status" value="1"/>
</dbReference>
<dbReference type="SUPFAM" id="SSF48350">
    <property type="entry name" value="GTPase activation domain, GAP"/>
    <property type="match status" value="1"/>
</dbReference>
<dbReference type="PROSITE" id="PS50238">
    <property type="entry name" value="RHOGAP"/>
    <property type="match status" value="1"/>
</dbReference>
<dbReference type="PROSITE" id="PS00479">
    <property type="entry name" value="ZF_DAG_PE_1"/>
    <property type="match status" value="1"/>
</dbReference>
<dbReference type="PROSITE" id="PS50081">
    <property type="entry name" value="ZF_DAG_PE_2"/>
    <property type="match status" value="1"/>
</dbReference>